<feature type="signal peptide" evidence="2">
    <location>
        <begin position="1"/>
        <end position="24"/>
    </location>
</feature>
<feature type="chain" id="PRO_0000424389" description="Potassium channel toxin alpha-KTx 30.1">
    <location>
        <begin position="25"/>
        <end position="66"/>
    </location>
</feature>
<feature type="disulfide bond" evidence="1">
    <location>
        <begin position="30"/>
        <end position="50"/>
    </location>
</feature>
<feature type="disulfide bond" evidence="1">
    <location>
        <begin position="36"/>
        <end position="55"/>
    </location>
</feature>
<feature type="disulfide bond" evidence="1">
    <location>
        <begin position="40"/>
        <end position="57"/>
    </location>
</feature>
<dbReference type="EMBL" id="FD664509">
    <property type="status" value="NOT_ANNOTATED_CDS"/>
    <property type="molecule type" value="mRNA"/>
</dbReference>
<dbReference type="SMR" id="P0DL33"/>
<dbReference type="GO" id="GO:0005576">
    <property type="term" value="C:extracellular region"/>
    <property type="evidence" value="ECO:0007669"/>
    <property type="project" value="UniProtKB-SubCell"/>
</dbReference>
<dbReference type="GO" id="GO:0015459">
    <property type="term" value="F:potassium channel regulator activity"/>
    <property type="evidence" value="ECO:0007669"/>
    <property type="project" value="UniProtKB-KW"/>
</dbReference>
<dbReference type="GO" id="GO:0090729">
    <property type="term" value="F:toxin activity"/>
    <property type="evidence" value="ECO:0007669"/>
    <property type="project" value="UniProtKB-KW"/>
</dbReference>
<dbReference type="InterPro" id="IPR036574">
    <property type="entry name" value="Scorpion_toxin-like_sf"/>
</dbReference>
<dbReference type="SUPFAM" id="SSF57095">
    <property type="entry name" value="Scorpion toxin-like"/>
    <property type="match status" value="1"/>
</dbReference>
<name>KA301_SCOR</name>
<reference key="1">
    <citation type="journal article" date="2012" name="J. Proteomics">
        <title>Extreme diversity of scorpion venom peptides and proteins revealed by transcriptomic analysis: implication for proteome evolution of scorpion venom arsenal.</title>
        <authorList>
            <person name="Ma Y."/>
            <person name="He Y."/>
            <person name="Zhao R."/>
            <person name="Wu Y."/>
            <person name="Li W."/>
            <person name="Cao Z."/>
        </authorList>
    </citation>
    <scope>NUCLEOTIDE SEQUENCE [MRNA]</scope>
</reference>
<reference key="2">
    <citation type="journal article" date="2012" name="PLoS ONE">
        <title>Structural and functional diversity of acidic scorpion potassium channel toxins.</title>
        <authorList>
            <person name="Chen Z.Y."/>
            <person name="Zeng D.Y."/>
            <person name="Hu Y.T."/>
            <person name="He Y.W."/>
            <person name="Pan N."/>
            <person name="Ding J.P."/>
            <person name="Cao Z.J."/>
            <person name="Liu M.L."/>
            <person name="Li W.X."/>
            <person name="Yi H."/>
            <person name="Jiang L."/>
            <person name="Wu Y.L."/>
        </authorList>
    </citation>
    <scope>NUCLEOTIDE SEQUENCE [MRNA]</scope>
    <scope>FUNCTION</scope>
    <source>
        <tissue>Venom gland</tissue>
    </source>
</reference>
<accession>P0DL33</accession>
<organism>
    <name type="scientific">Scorpiops margerisonae</name>
    <name type="common">Scorpion</name>
    <dbReference type="NCBI Taxonomy" id="856992"/>
    <lineage>
        <taxon>Eukaryota</taxon>
        <taxon>Metazoa</taxon>
        <taxon>Ecdysozoa</taxon>
        <taxon>Arthropoda</taxon>
        <taxon>Chelicerata</taxon>
        <taxon>Arachnida</taxon>
        <taxon>Scorpiones</taxon>
        <taxon>Iurida</taxon>
        <taxon>Chactoidea</taxon>
        <taxon>Euscorpiidae</taxon>
        <taxon>Scorpiopinae</taxon>
        <taxon>Scorpiopini</taxon>
        <taxon>Scorpiops</taxon>
    </lineage>
</organism>
<sequence>MNTGFFFFVIMATGLVLTFDTIHAEDKLKCTKTDDCAKYCSQFTDVHPACLGGYCECLRWEGGISS</sequence>
<comment type="function">
    <text evidence="3">inhibits Kv1.3/KCNA3 channel (1 uM of the toxin inhibits currents by 64.1%).</text>
</comment>
<comment type="subcellular location">
    <subcellularLocation>
        <location evidence="1">Secreted</location>
    </subcellularLocation>
</comment>
<comment type="tissue specificity">
    <text>Expressed by the venom gland.</text>
</comment>
<comment type="domain">
    <text evidence="4">Has the structural arrangement of an alpha-helix connected to antiparallel beta-sheets by disulfide bonds (CS-alpha/beta).</text>
</comment>
<comment type="miscellaneous">
    <text evidence="5">Negative results: does not block Kv7.1/KCNQ1 channels.</text>
</comment>
<comment type="similarity">
    <text evidence="4">Belongs to the short scorpion toxin superfamily. Potassium channel inhibitor family. Alpha-KTx 30 subfamily.</text>
</comment>
<comment type="caution">
    <text evidence="4">PubMed:22511981 refers the nucleotide sequence FD664509 as coming from Scorpiops tibetanus.</text>
</comment>
<proteinExistence type="evidence at transcript level"/>
<evidence type="ECO:0000250" key="1"/>
<evidence type="ECO:0000255" key="2"/>
<evidence type="ECO:0000269" key="3">
    <source>
    </source>
</evidence>
<evidence type="ECO:0000305" key="4"/>
<evidence type="ECO:0000305" key="5">
    <source>
    </source>
</evidence>
<protein>
    <recommendedName>
        <fullName>Potassium channel toxin alpha-KTx 30.1</fullName>
    </recommendedName>
    <alternativeName>
        <fullName>Toxin SjKTx23</fullName>
    </alternativeName>
    <alternativeName>
        <fullName>Toxin StKTx23</fullName>
    </alternativeName>
</protein>
<keyword id="KW-1015">Disulfide bond</keyword>
<keyword id="KW-0872">Ion channel impairing toxin</keyword>
<keyword id="KW-0528">Neurotoxin</keyword>
<keyword id="KW-0632">Potassium channel impairing toxin</keyword>
<keyword id="KW-0964">Secreted</keyword>
<keyword id="KW-0732">Signal</keyword>
<keyword id="KW-0800">Toxin</keyword>
<keyword id="KW-1220">Voltage-gated potassium channel impairing toxin</keyword>